<feature type="chain" id="PRO_0000174986" description="Thymidine kinase">
    <location>
        <begin position="1"/>
        <end position="209"/>
    </location>
</feature>
<feature type="active site" description="Proton acceptor" evidence="1">
    <location>
        <position position="89"/>
    </location>
</feature>
<feature type="binding site" evidence="1">
    <location>
        <begin position="9"/>
        <end position="16"/>
    </location>
    <ligand>
        <name>ATP</name>
        <dbReference type="ChEBI" id="CHEBI:30616"/>
    </ligand>
</feature>
<feature type="binding site" evidence="1">
    <location>
        <begin position="88"/>
        <end position="91"/>
    </location>
    <ligand>
        <name>ATP</name>
        <dbReference type="ChEBI" id="CHEBI:30616"/>
    </ligand>
</feature>
<feature type="binding site" evidence="1">
    <location>
        <position position="146"/>
    </location>
    <ligand>
        <name>Zn(2+)</name>
        <dbReference type="ChEBI" id="CHEBI:29105"/>
    </ligand>
</feature>
<feature type="binding site" evidence="1">
    <location>
        <position position="148"/>
    </location>
    <ligand>
        <name>Zn(2+)</name>
        <dbReference type="ChEBI" id="CHEBI:29105"/>
    </ligand>
</feature>
<feature type="binding site" evidence="1">
    <location>
        <position position="183"/>
    </location>
    <ligand>
        <name>Zn(2+)</name>
        <dbReference type="ChEBI" id="CHEBI:29105"/>
    </ligand>
</feature>
<feature type="binding site" evidence="1">
    <location>
        <position position="186"/>
    </location>
    <ligand>
        <name>Zn(2+)</name>
        <dbReference type="ChEBI" id="CHEBI:29105"/>
    </ligand>
</feature>
<name>KITH_LEGPH</name>
<keyword id="KW-0067">ATP-binding</keyword>
<keyword id="KW-0963">Cytoplasm</keyword>
<keyword id="KW-0237">DNA synthesis</keyword>
<keyword id="KW-0418">Kinase</keyword>
<keyword id="KW-0479">Metal-binding</keyword>
<keyword id="KW-0547">Nucleotide-binding</keyword>
<keyword id="KW-1185">Reference proteome</keyword>
<keyword id="KW-0808">Transferase</keyword>
<keyword id="KW-0862">Zinc</keyword>
<reference key="1">
    <citation type="journal article" date="2004" name="Science">
        <title>The genomic sequence of the accidental pathogen Legionella pneumophila.</title>
        <authorList>
            <person name="Chien M."/>
            <person name="Morozova I."/>
            <person name="Shi S."/>
            <person name="Sheng H."/>
            <person name="Chen J."/>
            <person name="Gomez S.M."/>
            <person name="Asamani G."/>
            <person name="Hill K."/>
            <person name="Nuara J."/>
            <person name="Feder M."/>
            <person name="Rineer J."/>
            <person name="Greenberg J.J."/>
            <person name="Steshenko V."/>
            <person name="Park S.H."/>
            <person name="Zhao B."/>
            <person name="Teplitskaya E."/>
            <person name="Edwards J.R."/>
            <person name="Pampou S."/>
            <person name="Georghiou A."/>
            <person name="Chou I.-C."/>
            <person name="Iannuccilli W."/>
            <person name="Ulz M.E."/>
            <person name="Kim D.H."/>
            <person name="Geringer-Sameth A."/>
            <person name="Goldsberry C."/>
            <person name="Morozov P."/>
            <person name="Fischer S.G."/>
            <person name="Segal G."/>
            <person name="Qu X."/>
            <person name="Rzhetsky A."/>
            <person name="Zhang P."/>
            <person name="Cayanis E."/>
            <person name="De Jong P.J."/>
            <person name="Ju J."/>
            <person name="Kalachikov S."/>
            <person name="Shuman H.A."/>
            <person name="Russo J.J."/>
        </authorList>
    </citation>
    <scope>NUCLEOTIDE SEQUENCE [LARGE SCALE GENOMIC DNA]</scope>
    <source>
        <strain>Philadelphia 1 / ATCC 33152 / DSM 7513</strain>
    </source>
</reference>
<protein>
    <recommendedName>
        <fullName evidence="1">Thymidine kinase</fullName>
        <ecNumber evidence="1">2.7.1.21</ecNumber>
    </recommendedName>
</protein>
<accession>Q5ZXU5</accession>
<comment type="catalytic activity">
    <reaction evidence="1">
        <text>thymidine + ATP = dTMP + ADP + H(+)</text>
        <dbReference type="Rhea" id="RHEA:19129"/>
        <dbReference type="ChEBI" id="CHEBI:15378"/>
        <dbReference type="ChEBI" id="CHEBI:17748"/>
        <dbReference type="ChEBI" id="CHEBI:30616"/>
        <dbReference type="ChEBI" id="CHEBI:63528"/>
        <dbReference type="ChEBI" id="CHEBI:456216"/>
        <dbReference type="EC" id="2.7.1.21"/>
    </reaction>
</comment>
<comment type="subunit">
    <text evidence="1">Homotetramer.</text>
</comment>
<comment type="subcellular location">
    <subcellularLocation>
        <location evidence="1">Cytoplasm</location>
    </subcellularLocation>
</comment>
<comment type="similarity">
    <text evidence="1">Belongs to the thymidine kinase family.</text>
</comment>
<comment type="sequence caution" evidence="2">
    <conflict type="erroneous initiation">
        <sequence resource="EMBL-CDS" id="AAU26725"/>
    </conflict>
</comment>
<sequence>MAKLYFYYAAMNAGKSTVLLQSSYNYRERGMQTLLFTPAIDTRFQYGTICSRIGLSEQAYAFNNSDNLYVLTQEFQLQTQKYSCVLIDEAQFLTREQVYQLTEITDQMSIPVLAYGLRTDFRGELFPGSQFLLAWADELIELKTICHCGRKAIMNMRIDENGQAVVEGEQVLIGGNESYVATCRLHYKRGEAEVTFPRNKLFNKDTNAF</sequence>
<proteinExistence type="inferred from homology"/>
<organism>
    <name type="scientific">Legionella pneumophila subsp. pneumophila (strain Philadelphia 1 / ATCC 33152 / DSM 7513)</name>
    <dbReference type="NCBI Taxonomy" id="272624"/>
    <lineage>
        <taxon>Bacteria</taxon>
        <taxon>Pseudomonadati</taxon>
        <taxon>Pseudomonadota</taxon>
        <taxon>Gammaproteobacteria</taxon>
        <taxon>Legionellales</taxon>
        <taxon>Legionellaceae</taxon>
        <taxon>Legionella</taxon>
    </lineage>
</organism>
<dbReference type="EC" id="2.7.1.21" evidence="1"/>
<dbReference type="EMBL" id="AE017354">
    <property type="protein sequence ID" value="AAU26725.1"/>
    <property type="status" value="ALT_INIT"/>
    <property type="molecule type" value="Genomic_DNA"/>
</dbReference>
<dbReference type="RefSeq" id="WP_025862458.1">
    <property type="nucleotide sequence ID" value="NC_002942.5"/>
</dbReference>
<dbReference type="RefSeq" id="YP_094672.1">
    <property type="nucleotide sequence ID" value="NC_002942.5"/>
</dbReference>
<dbReference type="SMR" id="Q5ZXU5"/>
<dbReference type="STRING" id="272624.lpg0636"/>
<dbReference type="PaxDb" id="272624-lpg0636"/>
<dbReference type="KEGG" id="lpn:lpg0636"/>
<dbReference type="PATRIC" id="fig|272624.6.peg.654"/>
<dbReference type="eggNOG" id="COG1435">
    <property type="taxonomic scope" value="Bacteria"/>
</dbReference>
<dbReference type="HOGENOM" id="CLU_064400_2_1_6"/>
<dbReference type="OrthoDB" id="9781579at2"/>
<dbReference type="Proteomes" id="UP000000609">
    <property type="component" value="Chromosome"/>
</dbReference>
<dbReference type="GO" id="GO:0005829">
    <property type="term" value="C:cytosol"/>
    <property type="evidence" value="ECO:0007669"/>
    <property type="project" value="TreeGrafter"/>
</dbReference>
<dbReference type="GO" id="GO:0005524">
    <property type="term" value="F:ATP binding"/>
    <property type="evidence" value="ECO:0007669"/>
    <property type="project" value="UniProtKB-UniRule"/>
</dbReference>
<dbReference type="GO" id="GO:0004797">
    <property type="term" value="F:thymidine kinase activity"/>
    <property type="evidence" value="ECO:0007669"/>
    <property type="project" value="UniProtKB-UniRule"/>
</dbReference>
<dbReference type="GO" id="GO:0008270">
    <property type="term" value="F:zinc ion binding"/>
    <property type="evidence" value="ECO:0007669"/>
    <property type="project" value="UniProtKB-UniRule"/>
</dbReference>
<dbReference type="GO" id="GO:0071897">
    <property type="term" value="P:DNA biosynthetic process"/>
    <property type="evidence" value="ECO:0007669"/>
    <property type="project" value="UniProtKB-KW"/>
</dbReference>
<dbReference type="GO" id="GO:0046104">
    <property type="term" value="P:thymidine metabolic process"/>
    <property type="evidence" value="ECO:0007669"/>
    <property type="project" value="TreeGrafter"/>
</dbReference>
<dbReference type="FunFam" id="3.40.50.300:FF:000323">
    <property type="entry name" value="Thymidine kinase"/>
    <property type="match status" value="1"/>
</dbReference>
<dbReference type="Gene3D" id="3.30.60.20">
    <property type="match status" value="1"/>
</dbReference>
<dbReference type="Gene3D" id="3.40.50.300">
    <property type="entry name" value="P-loop containing nucleotide triphosphate hydrolases"/>
    <property type="match status" value="1"/>
</dbReference>
<dbReference type="HAMAP" id="MF_00124">
    <property type="entry name" value="Thymidine_kinase"/>
    <property type="match status" value="1"/>
</dbReference>
<dbReference type="InterPro" id="IPR027417">
    <property type="entry name" value="P-loop_NTPase"/>
</dbReference>
<dbReference type="InterPro" id="IPR001267">
    <property type="entry name" value="Thymidine_kinase"/>
</dbReference>
<dbReference type="InterPro" id="IPR020633">
    <property type="entry name" value="Thymidine_kinase_CS"/>
</dbReference>
<dbReference type="NCBIfam" id="NF003300">
    <property type="entry name" value="PRK04296.1-5"/>
    <property type="match status" value="1"/>
</dbReference>
<dbReference type="PANTHER" id="PTHR11441">
    <property type="entry name" value="THYMIDINE KINASE"/>
    <property type="match status" value="1"/>
</dbReference>
<dbReference type="PANTHER" id="PTHR11441:SF0">
    <property type="entry name" value="THYMIDINE KINASE, CYTOSOLIC"/>
    <property type="match status" value="1"/>
</dbReference>
<dbReference type="Pfam" id="PF00265">
    <property type="entry name" value="TK"/>
    <property type="match status" value="1"/>
</dbReference>
<dbReference type="PIRSF" id="PIRSF035805">
    <property type="entry name" value="TK_cell"/>
    <property type="match status" value="1"/>
</dbReference>
<dbReference type="SUPFAM" id="SSF57716">
    <property type="entry name" value="Glucocorticoid receptor-like (DNA-binding domain)"/>
    <property type="match status" value="1"/>
</dbReference>
<dbReference type="SUPFAM" id="SSF52540">
    <property type="entry name" value="P-loop containing nucleoside triphosphate hydrolases"/>
    <property type="match status" value="1"/>
</dbReference>
<dbReference type="PROSITE" id="PS00603">
    <property type="entry name" value="TK_CELLULAR_TYPE"/>
    <property type="match status" value="1"/>
</dbReference>
<gene>
    <name evidence="1" type="primary">tdk</name>
    <name type="ordered locus">lpg0636</name>
</gene>
<evidence type="ECO:0000255" key="1">
    <source>
        <dbReference type="HAMAP-Rule" id="MF_00124"/>
    </source>
</evidence>
<evidence type="ECO:0000305" key="2"/>